<accession>P13441</accession>
<protein>
    <recommendedName>
        <fullName>Sulfate adenylyltransferase subunit 2</fullName>
        <ecNumber>2.7.7.4</ecNumber>
    </recommendedName>
    <alternativeName>
        <fullName>ATP-sulfurylase small subunit</fullName>
    </alternativeName>
    <alternativeName>
        <fullName>Nodulation protein P</fullName>
    </alternativeName>
    <alternativeName>
        <fullName>Sulfate adenylate transferase</fullName>
        <shortName>SAT</shortName>
    </alternativeName>
</protein>
<geneLocation type="plasmid">
    <name>pSymA</name>
    <name>megaplasmid 1</name>
</geneLocation>
<proteinExistence type="inferred from homology"/>
<dbReference type="EC" id="2.7.7.4"/>
<dbReference type="EMBL" id="X14809">
    <property type="protein sequence ID" value="CAA32913.1"/>
    <property type="molecule type" value="Genomic_DNA"/>
</dbReference>
<dbReference type="EMBL" id="M68858">
    <property type="protein sequence ID" value="AAA26342.1"/>
    <property type="molecule type" value="Genomic_DNA"/>
</dbReference>
<dbReference type="EMBL" id="AE006469">
    <property type="protein sequence ID" value="AAK65126.1"/>
    <property type="molecule type" value="Genomic_DNA"/>
</dbReference>
<dbReference type="PIR" id="D95320">
    <property type="entry name" value="D95320"/>
</dbReference>
<dbReference type="PIR" id="S14898">
    <property type="entry name" value="ZZZRNP"/>
</dbReference>
<dbReference type="RefSeq" id="NP_435714.1">
    <property type="nucleotide sequence ID" value="NC_003037.1"/>
</dbReference>
<dbReference type="SMR" id="P13441"/>
<dbReference type="EnsemblBacteria" id="AAK65126">
    <property type="protein sequence ID" value="AAK65126"/>
    <property type="gene ID" value="SMa0855"/>
</dbReference>
<dbReference type="KEGG" id="sme:SMa0855"/>
<dbReference type="PATRIC" id="fig|266834.11.peg.478"/>
<dbReference type="eggNOG" id="COG0175">
    <property type="taxonomic scope" value="Bacteria"/>
</dbReference>
<dbReference type="HOGENOM" id="CLU_043026_0_0_5"/>
<dbReference type="OrthoDB" id="9772604at2"/>
<dbReference type="Proteomes" id="UP000001976">
    <property type="component" value="Plasmid pSymA"/>
</dbReference>
<dbReference type="GO" id="GO:0005524">
    <property type="term" value="F:ATP binding"/>
    <property type="evidence" value="ECO:0007669"/>
    <property type="project" value="UniProtKB-KW"/>
</dbReference>
<dbReference type="GO" id="GO:0004781">
    <property type="term" value="F:sulfate adenylyltransferase (ATP) activity"/>
    <property type="evidence" value="ECO:0007669"/>
    <property type="project" value="UniProtKB-UniRule"/>
</dbReference>
<dbReference type="GO" id="GO:0070814">
    <property type="term" value="P:hydrogen sulfide biosynthetic process"/>
    <property type="evidence" value="ECO:0007669"/>
    <property type="project" value="UniProtKB-UniRule"/>
</dbReference>
<dbReference type="GO" id="GO:0000103">
    <property type="term" value="P:sulfate assimilation"/>
    <property type="evidence" value="ECO:0007669"/>
    <property type="project" value="UniProtKB-UniRule"/>
</dbReference>
<dbReference type="CDD" id="cd23946">
    <property type="entry name" value="Sulfate_adenylyltransferase_2"/>
    <property type="match status" value="1"/>
</dbReference>
<dbReference type="FunFam" id="3.40.50.620:FF:000002">
    <property type="entry name" value="Sulfate adenylyltransferase subunit 2"/>
    <property type="match status" value="1"/>
</dbReference>
<dbReference type="Gene3D" id="3.40.50.620">
    <property type="entry name" value="HUPs"/>
    <property type="match status" value="1"/>
</dbReference>
<dbReference type="HAMAP" id="MF_00064">
    <property type="entry name" value="Sulf_adenylyltr_sub2"/>
    <property type="match status" value="1"/>
</dbReference>
<dbReference type="InterPro" id="IPR002500">
    <property type="entry name" value="PAPS_reduct_dom"/>
</dbReference>
<dbReference type="InterPro" id="IPR014729">
    <property type="entry name" value="Rossmann-like_a/b/a_fold"/>
</dbReference>
<dbReference type="InterPro" id="IPR011784">
    <property type="entry name" value="SO4_adenylTrfase_ssu"/>
</dbReference>
<dbReference type="InterPro" id="IPR050128">
    <property type="entry name" value="Sulfate_adenylyltrnsfr_sub2"/>
</dbReference>
<dbReference type="NCBIfam" id="TIGR02039">
    <property type="entry name" value="CysD"/>
    <property type="match status" value="1"/>
</dbReference>
<dbReference type="NCBIfam" id="NF003587">
    <property type="entry name" value="PRK05253.1"/>
    <property type="match status" value="1"/>
</dbReference>
<dbReference type="NCBIfam" id="NF009214">
    <property type="entry name" value="PRK12563.1"/>
    <property type="match status" value="1"/>
</dbReference>
<dbReference type="PANTHER" id="PTHR43196">
    <property type="entry name" value="SULFATE ADENYLYLTRANSFERASE SUBUNIT 2"/>
    <property type="match status" value="1"/>
</dbReference>
<dbReference type="PANTHER" id="PTHR43196:SF1">
    <property type="entry name" value="SULFATE ADENYLYLTRANSFERASE SUBUNIT 2"/>
    <property type="match status" value="1"/>
</dbReference>
<dbReference type="Pfam" id="PF01507">
    <property type="entry name" value="PAPS_reduct"/>
    <property type="match status" value="1"/>
</dbReference>
<dbReference type="PIRSF" id="PIRSF002936">
    <property type="entry name" value="CysDAde_trans"/>
    <property type="match status" value="1"/>
</dbReference>
<dbReference type="SUPFAM" id="SSF52402">
    <property type="entry name" value="Adenine nucleotide alpha hydrolases-like"/>
    <property type="match status" value="1"/>
</dbReference>
<comment type="function">
    <text>Proposed to provide activated sulfate for transfer to nod factor.</text>
</comment>
<comment type="catalytic activity">
    <reaction>
        <text>sulfate + ATP + H(+) = adenosine 5'-phosphosulfate + diphosphate</text>
        <dbReference type="Rhea" id="RHEA:18133"/>
        <dbReference type="ChEBI" id="CHEBI:15378"/>
        <dbReference type="ChEBI" id="CHEBI:16189"/>
        <dbReference type="ChEBI" id="CHEBI:30616"/>
        <dbReference type="ChEBI" id="CHEBI:33019"/>
        <dbReference type="ChEBI" id="CHEBI:58243"/>
        <dbReference type="EC" id="2.7.7.4"/>
    </reaction>
</comment>
<comment type="subunit">
    <text evidence="1">Sulfate-activating enzymes, NodP and NodQ, may be physically associated.</text>
</comment>
<comment type="similarity">
    <text evidence="1">Belongs to the PAPS reductase family. CysD subfamily.</text>
</comment>
<evidence type="ECO:0000305" key="1"/>
<name>NODP_RHIME</name>
<organism>
    <name type="scientific">Rhizobium meliloti (strain 1021)</name>
    <name type="common">Ensifer meliloti</name>
    <name type="synonym">Sinorhizobium meliloti</name>
    <dbReference type="NCBI Taxonomy" id="266834"/>
    <lineage>
        <taxon>Bacteria</taxon>
        <taxon>Pseudomonadati</taxon>
        <taxon>Pseudomonadota</taxon>
        <taxon>Alphaproteobacteria</taxon>
        <taxon>Hyphomicrobiales</taxon>
        <taxon>Rhizobiaceae</taxon>
        <taxon>Sinorhizobium/Ensifer group</taxon>
        <taxon>Sinorhizobium</taxon>
    </lineage>
</organism>
<keyword id="KW-0067">ATP-binding</keyword>
<keyword id="KW-0536">Nodulation</keyword>
<keyword id="KW-0547">Nucleotide-binding</keyword>
<keyword id="KW-0548">Nucleotidyltransferase</keyword>
<keyword id="KW-0614">Plasmid</keyword>
<keyword id="KW-1185">Reference proteome</keyword>
<keyword id="KW-0808">Transferase</keyword>
<reference key="1">
    <citation type="journal article" date="1989" name="Mol. Microbiol.">
        <title>The Rhizobium meliloti host range nodQ gene encodes a protein which shares homology with translation elongation and initiation factors.</title>
        <authorList>
            <person name="Cervantes E."/>
            <person name="Sharma S.B."/>
            <person name="Maillet F."/>
            <person name="Vasse J."/>
            <person name="Truchet G."/>
            <person name="Rosenberg C."/>
        </authorList>
    </citation>
    <scope>NUCLEOTIDE SEQUENCE [GENOMIC DNA]</scope>
    <source>
        <strain>RCR2011 / SU47</strain>
    </source>
</reference>
<reference key="2">
    <citation type="journal article" date="1989" name="Mol. Plant Microbe Interact.">
        <title>Nucleotide sequence and protein products of two new nodulation genes of Rhizobium meliloti, nodP and nodQ.</title>
        <authorList>
            <person name="Schwedock J."/>
            <person name="Long S.R."/>
        </authorList>
    </citation>
    <scope>NUCLEOTIDE SEQUENCE [GENOMIC DNA]</scope>
</reference>
<reference key="3">
    <citation type="journal article" date="2001" name="Proc. Natl. Acad. Sci. U.S.A.">
        <title>Nucleotide sequence and predicted functions of the entire Sinorhizobium meliloti pSymA megaplasmid.</title>
        <authorList>
            <person name="Barnett M.J."/>
            <person name="Fisher R.F."/>
            <person name="Jones T."/>
            <person name="Komp C."/>
            <person name="Abola A.P."/>
            <person name="Barloy-Hubler F."/>
            <person name="Bowser L."/>
            <person name="Capela D."/>
            <person name="Galibert F."/>
            <person name="Gouzy J."/>
            <person name="Gurjal M."/>
            <person name="Hong A."/>
            <person name="Huizar L."/>
            <person name="Hyman R.W."/>
            <person name="Kahn D."/>
            <person name="Kahn M.L."/>
            <person name="Kalman S."/>
            <person name="Keating D.H."/>
            <person name="Palm C."/>
            <person name="Peck M.C."/>
            <person name="Surzycki R."/>
            <person name="Wells D.H."/>
            <person name="Yeh K.-C."/>
            <person name="Davis R.W."/>
            <person name="Federspiel N.A."/>
            <person name="Long S.R."/>
        </authorList>
    </citation>
    <scope>NUCLEOTIDE SEQUENCE [LARGE SCALE GENOMIC DNA]</scope>
    <source>
        <strain>1021</strain>
    </source>
</reference>
<reference key="4">
    <citation type="journal article" date="2001" name="Science">
        <title>The composite genome of the legume symbiont Sinorhizobium meliloti.</title>
        <authorList>
            <person name="Galibert F."/>
            <person name="Finan T.M."/>
            <person name="Long S.R."/>
            <person name="Puehler A."/>
            <person name="Abola P."/>
            <person name="Ampe F."/>
            <person name="Barloy-Hubler F."/>
            <person name="Barnett M.J."/>
            <person name="Becker A."/>
            <person name="Boistard P."/>
            <person name="Bothe G."/>
            <person name="Boutry M."/>
            <person name="Bowser L."/>
            <person name="Buhrmester J."/>
            <person name="Cadieu E."/>
            <person name="Capela D."/>
            <person name="Chain P."/>
            <person name="Cowie A."/>
            <person name="Davis R.W."/>
            <person name="Dreano S."/>
            <person name="Federspiel N.A."/>
            <person name="Fisher R.F."/>
            <person name="Gloux S."/>
            <person name="Godrie T."/>
            <person name="Goffeau A."/>
            <person name="Golding B."/>
            <person name="Gouzy J."/>
            <person name="Gurjal M."/>
            <person name="Hernandez-Lucas I."/>
            <person name="Hong A."/>
            <person name="Huizar L."/>
            <person name="Hyman R.W."/>
            <person name="Jones T."/>
            <person name="Kahn D."/>
            <person name="Kahn M.L."/>
            <person name="Kalman S."/>
            <person name="Keating D.H."/>
            <person name="Kiss E."/>
            <person name="Komp C."/>
            <person name="Lelaure V."/>
            <person name="Masuy D."/>
            <person name="Palm C."/>
            <person name="Peck M.C."/>
            <person name="Pohl T.M."/>
            <person name="Portetelle D."/>
            <person name="Purnelle B."/>
            <person name="Ramsperger U."/>
            <person name="Surzycki R."/>
            <person name="Thebault P."/>
            <person name="Vandenbol M."/>
            <person name="Vorhoelter F.J."/>
            <person name="Weidner S."/>
            <person name="Wells D.H."/>
            <person name="Wong K."/>
            <person name="Yeh K.-C."/>
            <person name="Batut J."/>
        </authorList>
    </citation>
    <scope>NUCLEOTIDE SEQUENCE [LARGE SCALE GENOMIC DNA]</scope>
    <source>
        <strain>1021</strain>
    </source>
</reference>
<gene>
    <name type="primary">nodP</name>
    <name type="ordered locus">RA0468</name>
    <name type="ORF">SMa0855</name>
</gene>
<sequence length="299" mass="34763">MSLPHLRRLEAEAIHVIREVVATFSNPVVLYSIGKDSSVLLHLAMKAFYPAKPPFPFLHVDTKWKFREMIEFRDRMARELGFDLLVHVNQDGVEQGIGPFTHGSNVHTHVMKTMGLRQALEKYGFDAALAGARRDEEKSRAKERIFSIRSAQHGWDPQRQRPEMWKTYNTRVGQGETMRVFPLSNWTEFDIWQYILREEIPIVPLYFAARRPVVKREGMLIMVDDDRMPIQPEEEVTEQLVRFRTLGCYPLTGAVESDAVTVPEILREMLTVRTSERQSRLIDTDEVGAMEKKKREGYF</sequence>
<feature type="chain" id="PRO_0000100685" description="Sulfate adenylyltransferase subunit 2">
    <location>
        <begin position="1"/>
        <end position="299"/>
    </location>
</feature>